<proteinExistence type="inferred from homology"/>
<keyword id="KW-0963">Cytoplasm</keyword>
<keyword id="KW-0378">Hydrolase</keyword>
<keyword id="KW-0645">Protease</keyword>
<keyword id="KW-0788">Thiol protease</keyword>
<comment type="function">
    <text evidence="1">Removes 5-oxoproline from various penultimate amino acid residues except L-proline.</text>
</comment>
<comment type="catalytic activity">
    <reaction evidence="1">
        <text>Release of an N-terminal pyroglutamyl group from a polypeptide, the second amino acid generally not being Pro.</text>
        <dbReference type="EC" id="3.4.19.3"/>
    </reaction>
</comment>
<comment type="subunit">
    <text evidence="1">Homotetramer.</text>
</comment>
<comment type="subcellular location">
    <subcellularLocation>
        <location evidence="1">Cytoplasm</location>
    </subcellularLocation>
</comment>
<comment type="similarity">
    <text evidence="1">Belongs to the peptidase C15 family.</text>
</comment>
<sequence>MHILVTGFAPFDNQDINPSWEAVTQLEDIIGTHTIDKLKLPTSFKKVDTMINKALASNHYDIVLSIGQAGGRSAITPERVAINIDDARIPDNDDFQPIDQAIHLDGAPAYFSNLPVKAMTQSIINQGLPGALSNSAGTFVCNHVLYHLGYLQDKHYPLLRFGFIHVPYIPEQIDGKSDTPSMTLENIVTGLTAAIEAISDDDDLRIALGTTE</sequence>
<protein>
    <recommendedName>
        <fullName evidence="1">Pyrrolidone-carboxylate peptidase</fullName>
        <ecNumber evidence="1">3.4.19.3</ecNumber>
    </recommendedName>
    <alternativeName>
        <fullName evidence="1">5-oxoprolyl-peptidase</fullName>
    </alternativeName>
    <alternativeName>
        <fullName evidence="1">Pyroglutamyl-peptidase I</fullName>
        <shortName evidence="1">PGP-I</shortName>
        <shortName evidence="1">Pyrase</shortName>
    </alternativeName>
</protein>
<dbReference type="EC" id="3.4.19.3" evidence="1"/>
<dbReference type="EMBL" id="AJ938182">
    <property type="protein sequence ID" value="CAI82254.1"/>
    <property type="molecule type" value="Genomic_DNA"/>
</dbReference>
<dbReference type="RefSeq" id="WP_000547817.1">
    <property type="nucleotide sequence ID" value="NC_007622.1"/>
</dbReference>
<dbReference type="SMR" id="Q2YZA2"/>
<dbReference type="MEROPS" id="C15.001"/>
<dbReference type="KEGG" id="sab:SAB2566"/>
<dbReference type="HOGENOM" id="CLU_043960_4_0_9"/>
<dbReference type="GO" id="GO:0005829">
    <property type="term" value="C:cytosol"/>
    <property type="evidence" value="ECO:0007669"/>
    <property type="project" value="InterPro"/>
</dbReference>
<dbReference type="GO" id="GO:0016920">
    <property type="term" value="F:pyroglutamyl-peptidase activity"/>
    <property type="evidence" value="ECO:0007669"/>
    <property type="project" value="UniProtKB-UniRule"/>
</dbReference>
<dbReference type="GO" id="GO:0006508">
    <property type="term" value="P:proteolysis"/>
    <property type="evidence" value="ECO:0007669"/>
    <property type="project" value="UniProtKB-KW"/>
</dbReference>
<dbReference type="CDD" id="cd00501">
    <property type="entry name" value="Peptidase_C15"/>
    <property type="match status" value="1"/>
</dbReference>
<dbReference type="FunFam" id="3.40.630.20:FF:000001">
    <property type="entry name" value="Pyrrolidone-carboxylate peptidase"/>
    <property type="match status" value="1"/>
</dbReference>
<dbReference type="Gene3D" id="3.40.630.20">
    <property type="entry name" value="Peptidase C15, pyroglutamyl peptidase I-like"/>
    <property type="match status" value="1"/>
</dbReference>
<dbReference type="HAMAP" id="MF_00417">
    <property type="entry name" value="Pyrrolid_peptidase"/>
    <property type="match status" value="1"/>
</dbReference>
<dbReference type="InterPro" id="IPR000816">
    <property type="entry name" value="Peptidase_C15"/>
</dbReference>
<dbReference type="InterPro" id="IPR016125">
    <property type="entry name" value="Peptidase_C15-like"/>
</dbReference>
<dbReference type="InterPro" id="IPR036440">
    <property type="entry name" value="Peptidase_C15-like_sf"/>
</dbReference>
<dbReference type="InterPro" id="IPR029762">
    <property type="entry name" value="PGP-I_bact-type"/>
</dbReference>
<dbReference type="InterPro" id="IPR033694">
    <property type="entry name" value="PGPEP1_Cys_AS"/>
</dbReference>
<dbReference type="InterPro" id="IPR033693">
    <property type="entry name" value="PGPEP1_Glu_AS"/>
</dbReference>
<dbReference type="NCBIfam" id="NF009676">
    <property type="entry name" value="PRK13197.1"/>
    <property type="match status" value="1"/>
</dbReference>
<dbReference type="NCBIfam" id="TIGR00504">
    <property type="entry name" value="pyro_pdase"/>
    <property type="match status" value="1"/>
</dbReference>
<dbReference type="PANTHER" id="PTHR23402">
    <property type="entry name" value="PROTEASE FAMILY C15 PYROGLUTAMYL-PEPTIDASE I-RELATED"/>
    <property type="match status" value="1"/>
</dbReference>
<dbReference type="PANTHER" id="PTHR23402:SF1">
    <property type="entry name" value="PYROGLUTAMYL-PEPTIDASE I"/>
    <property type="match status" value="1"/>
</dbReference>
<dbReference type="Pfam" id="PF01470">
    <property type="entry name" value="Peptidase_C15"/>
    <property type="match status" value="1"/>
</dbReference>
<dbReference type="PIRSF" id="PIRSF015592">
    <property type="entry name" value="Prld-crbxl_pptds"/>
    <property type="match status" value="1"/>
</dbReference>
<dbReference type="PRINTS" id="PR00706">
    <property type="entry name" value="PYROGLUPTASE"/>
</dbReference>
<dbReference type="SUPFAM" id="SSF53182">
    <property type="entry name" value="Pyrrolidone carboxyl peptidase (pyroglutamate aminopeptidase)"/>
    <property type="match status" value="1"/>
</dbReference>
<dbReference type="PROSITE" id="PS01334">
    <property type="entry name" value="PYRASE_CYS"/>
    <property type="match status" value="1"/>
</dbReference>
<dbReference type="PROSITE" id="PS01333">
    <property type="entry name" value="PYRASE_GLU"/>
    <property type="match status" value="1"/>
</dbReference>
<name>PCP_STAAB</name>
<gene>
    <name evidence="1" type="primary">pcp</name>
    <name type="ordered locus">SAB2566</name>
</gene>
<accession>Q2YZA2</accession>
<feature type="chain" id="PRO_1000050140" description="Pyrrolidone-carboxylate peptidase">
    <location>
        <begin position="1"/>
        <end position="212"/>
    </location>
</feature>
<feature type="active site" evidence="1">
    <location>
        <position position="78"/>
    </location>
</feature>
<feature type="active site" evidence="1">
    <location>
        <position position="141"/>
    </location>
</feature>
<feature type="active site" evidence="1">
    <location>
        <position position="165"/>
    </location>
</feature>
<reference key="1">
    <citation type="journal article" date="2007" name="PLoS ONE">
        <title>Molecular correlates of host specialization in Staphylococcus aureus.</title>
        <authorList>
            <person name="Herron-Olson L."/>
            <person name="Fitzgerald J.R."/>
            <person name="Musser J.M."/>
            <person name="Kapur V."/>
        </authorList>
    </citation>
    <scope>NUCLEOTIDE SEQUENCE [LARGE SCALE GENOMIC DNA]</scope>
    <source>
        <strain>bovine RF122 / ET3-1</strain>
    </source>
</reference>
<evidence type="ECO:0000255" key="1">
    <source>
        <dbReference type="HAMAP-Rule" id="MF_00417"/>
    </source>
</evidence>
<organism>
    <name type="scientific">Staphylococcus aureus (strain bovine RF122 / ET3-1)</name>
    <dbReference type="NCBI Taxonomy" id="273036"/>
    <lineage>
        <taxon>Bacteria</taxon>
        <taxon>Bacillati</taxon>
        <taxon>Bacillota</taxon>
        <taxon>Bacilli</taxon>
        <taxon>Bacillales</taxon>
        <taxon>Staphylococcaceae</taxon>
        <taxon>Staphylococcus</taxon>
    </lineage>
</organism>